<sequence>MPTPIHVLPPHVARLIAAGEVVSRPLDVVRELVENALDAGASRIEIEVDGGGLERVQVRDNGSGIAAQSVPLAPARHATSKLTAGPETGSLSVTTLGFRGEALWAAAQAGELELTTRPAAQVGAARLRAQGDAVEVSRTSAPAGTTVTVSQLFARLPARLRTQASAAAEVRDITALLGRYVLHHSALHWRLTVDGDPRLTHAPADHRGAVATVYGPLSANRVLTLDTPGVRGVVSRPELTRARRDRMHFAVNGRPIVAPPELERAVIDAYAELLPAGTAPLCVLDLTVAPEDYDPNIHPAKQVVALADLPAVALRVRDAVAGALAGHPLVRAAPALIAPPEPHPAPTAGNFPDLTLLGVYQELYLLAQGEGDLWVVDAHAAHERALYERLGRELGTAAPLELPTPELLHLTPEQTARLHERGAELRGWGLTIEDFGAGLARLRTLPAALAALPVPRLHEVVVETALSGGPDPRREVLARLACLPALKAGMLDAERGALVLAALRECEQPWACPHGRPTVLRLSERDLAHAFGRRGVRDVARGRDSVV</sequence>
<dbReference type="EMBL" id="AE000513">
    <property type="protein sequence ID" value="AAF11253.1"/>
    <property type="molecule type" value="Genomic_DNA"/>
</dbReference>
<dbReference type="PIR" id="G75364">
    <property type="entry name" value="G75364"/>
</dbReference>
<dbReference type="RefSeq" id="NP_295419.1">
    <property type="nucleotide sequence ID" value="NC_001263.1"/>
</dbReference>
<dbReference type="RefSeq" id="WP_010888331.1">
    <property type="nucleotide sequence ID" value="NC_001263.1"/>
</dbReference>
<dbReference type="SMR" id="Q9RTR0"/>
<dbReference type="FunCoup" id="Q9RTR0">
    <property type="interactions" value="434"/>
</dbReference>
<dbReference type="STRING" id="243230.DR_1696"/>
<dbReference type="PaxDb" id="243230-DR_1696"/>
<dbReference type="EnsemblBacteria" id="AAF11253">
    <property type="protein sequence ID" value="AAF11253"/>
    <property type="gene ID" value="DR_1696"/>
</dbReference>
<dbReference type="GeneID" id="69517932"/>
<dbReference type="KEGG" id="dra:DR_1696"/>
<dbReference type="PATRIC" id="fig|243230.17.peg.1907"/>
<dbReference type="eggNOG" id="COG0323">
    <property type="taxonomic scope" value="Bacteria"/>
</dbReference>
<dbReference type="HOGENOM" id="CLU_004131_4_1_0"/>
<dbReference type="InParanoid" id="Q9RTR0"/>
<dbReference type="OrthoDB" id="9763467at2"/>
<dbReference type="Proteomes" id="UP000002524">
    <property type="component" value="Chromosome 1"/>
</dbReference>
<dbReference type="GO" id="GO:0032300">
    <property type="term" value="C:mismatch repair complex"/>
    <property type="evidence" value="ECO:0000318"/>
    <property type="project" value="GO_Central"/>
</dbReference>
<dbReference type="GO" id="GO:0005524">
    <property type="term" value="F:ATP binding"/>
    <property type="evidence" value="ECO:0007669"/>
    <property type="project" value="InterPro"/>
</dbReference>
<dbReference type="GO" id="GO:0016887">
    <property type="term" value="F:ATP hydrolysis activity"/>
    <property type="evidence" value="ECO:0000318"/>
    <property type="project" value="GO_Central"/>
</dbReference>
<dbReference type="GO" id="GO:0140664">
    <property type="term" value="F:ATP-dependent DNA damage sensor activity"/>
    <property type="evidence" value="ECO:0007669"/>
    <property type="project" value="InterPro"/>
</dbReference>
<dbReference type="GO" id="GO:0030983">
    <property type="term" value="F:mismatched DNA binding"/>
    <property type="evidence" value="ECO:0007669"/>
    <property type="project" value="InterPro"/>
</dbReference>
<dbReference type="GO" id="GO:0006298">
    <property type="term" value="P:mismatch repair"/>
    <property type="evidence" value="ECO:0000318"/>
    <property type="project" value="GO_Central"/>
</dbReference>
<dbReference type="CDD" id="cd16926">
    <property type="entry name" value="HATPase_MutL-MLH-PMS-like"/>
    <property type="match status" value="1"/>
</dbReference>
<dbReference type="CDD" id="cd00782">
    <property type="entry name" value="MutL_Trans"/>
    <property type="match status" value="1"/>
</dbReference>
<dbReference type="FunFam" id="3.30.565.10:FF:000003">
    <property type="entry name" value="DNA mismatch repair endonuclease MutL"/>
    <property type="match status" value="1"/>
</dbReference>
<dbReference type="Gene3D" id="3.30.230.10">
    <property type="match status" value="1"/>
</dbReference>
<dbReference type="Gene3D" id="3.30.565.10">
    <property type="entry name" value="Histidine kinase-like ATPase, C-terminal domain"/>
    <property type="match status" value="1"/>
</dbReference>
<dbReference type="Gene3D" id="3.30.1540.20">
    <property type="entry name" value="MutL, C-terminal domain, dimerisation subdomain"/>
    <property type="match status" value="1"/>
</dbReference>
<dbReference type="Gene3D" id="3.30.1370.100">
    <property type="entry name" value="MutL, C-terminal domain, regulatory subdomain"/>
    <property type="match status" value="1"/>
</dbReference>
<dbReference type="HAMAP" id="MF_00149">
    <property type="entry name" value="DNA_mis_repair"/>
    <property type="match status" value="1"/>
</dbReference>
<dbReference type="InterPro" id="IPR014762">
    <property type="entry name" value="DNA_mismatch_repair_CS"/>
</dbReference>
<dbReference type="InterPro" id="IPR020667">
    <property type="entry name" value="DNA_mismatch_repair_MutL"/>
</dbReference>
<dbReference type="InterPro" id="IPR013507">
    <property type="entry name" value="DNA_mismatch_S5_2-like"/>
</dbReference>
<dbReference type="InterPro" id="IPR036890">
    <property type="entry name" value="HATPase_C_sf"/>
</dbReference>
<dbReference type="InterPro" id="IPR002099">
    <property type="entry name" value="MutL/Mlh/PMS"/>
</dbReference>
<dbReference type="InterPro" id="IPR038973">
    <property type="entry name" value="MutL/Mlh/Pms-like"/>
</dbReference>
<dbReference type="InterPro" id="IPR014790">
    <property type="entry name" value="MutL_C"/>
</dbReference>
<dbReference type="InterPro" id="IPR042120">
    <property type="entry name" value="MutL_C_dimsub"/>
</dbReference>
<dbReference type="InterPro" id="IPR042121">
    <property type="entry name" value="MutL_C_regsub"/>
</dbReference>
<dbReference type="InterPro" id="IPR037198">
    <property type="entry name" value="MutL_C_sf"/>
</dbReference>
<dbReference type="InterPro" id="IPR020568">
    <property type="entry name" value="Ribosomal_Su5_D2-typ_SF"/>
</dbReference>
<dbReference type="InterPro" id="IPR014721">
    <property type="entry name" value="Ribsml_uS5_D2-typ_fold_subgr"/>
</dbReference>
<dbReference type="NCBIfam" id="TIGR00585">
    <property type="entry name" value="mutl"/>
    <property type="match status" value="1"/>
</dbReference>
<dbReference type="PANTHER" id="PTHR10073">
    <property type="entry name" value="DNA MISMATCH REPAIR PROTEIN MLH, PMS, MUTL"/>
    <property type="match status" value="1"/>
</dbReference>
<dbReference type="PANTHER" id="PTHR10073:SF12">
    <property type="entry name" value="DNA MISMATCH REPAIR PROTEIN MLH1"/>
    <property type="match status" value="1"/>
</dbReference>
<dbReference type="Pfam" id="PF01119">
    <property type="entry name" value="DNA_mis_repair"/>
    <property type="match status" value="1"/>
</dbReference>
<dbReference type="Pfam" id="PF02518">
    <property type="entry name" value="HATPase_c"/>
    <property type="match status" value="1"/>
</dbReference>
<dbReference type="Pfam" id="PF08676">
    <property type="entry name" value="MutL_C"/>
    <property type="match status" value="1"/>
</dbReference>
<dbReference type="SMART" id="SM01340">
    <property type="entry name" value="DNA_mis_repair"/>
    <property type="match status" value="1"/>
</dbReference>
<dbReference type="SMART" id="SM00853">
    <property type="entry name" value="MutL_C"/>
    <property type="match status" value="1"/>
</dbReference>
<dbReference type="SUPFAM" id="SSF55874">
    <property type="entry name" value="ATPase domain of HSP90 chaperone/DNA topoisomerase II/histidine kinase"/>
    <property type="match status" value="1"/>
</dbReference>
<dbReference type="SUPFAM" id="SSF118116">
    <property type="entry name" value="DNA mismatch repair protein MutL"/>
    <property type="match status" value="1"/>
</dbReference>
<dbReference type="SUPFAM" id="SSF54211">
    <property type="entry name" value="Ribosomal protein S5 domain 2-like"/>
    <property type="match status" value="1"/>
</dbReference>
<dbReference type="PROSITE" id="PS00058">
    <property type="entry name" value="DNA_MISMATCH_REPAIR_1"/>
    <property type="match status" value="1"/>
</dbReference>
<protein>
    <recommendedName>
        <fullName evidence="1">DNA mismatch repair protein MutL</fullName>
    </recommendedName>
</protein>
<keyword id="KW-0227">DNA damage</keyword>
<keyword id="KW-0234">DNA repair</keyword>
<keyword id="KW-1185">Reference proteome</keyword>
<reference key="1">
    <citation type="journal article" date="1999" name="Science">
        <title>Genome sequence of the radioresistant bacterium Deinococcus radiodurans R1.</title>
        <authorList>
            <person name="White O."/>
            <person name="Eisen J.A."/>
            <person name="Heidelberg J.F."/>
            <person name="Hickey E.K."/>
            <person name="Peterson J.D."/>
            <person name="Dodson R.J."/>
            <person name="Haft D.H."/>
            <person name="Gwinn M.L."/>
            <person name="Nelson W.C."/>
            <person name="Richardson D.L."/>
            <person name="Moffat K.S."/>
            <person name="Qin H."/>
            <person name="Jiang L."/>
            <person name="Pamphile W."/>
            <person name="Crosby M."/>
            <person name="Shen M."/>
            <person name="Vamathevan J.J."/>
            <person name="Lam P."/>
            <person name="McDonald L.A."/>
            <person name="Utterback T.R."/>
            <person name="Zalewski C."/>
            <person name="Makarova K.S."/>
            <person name="Aravind L."/>
            <person name="Daly M.J."/>
            <person name="Minton K.W."/>
            <person name="Fleischmann R.D."/>
            <person name="Ketchum K.A."/>
            <person name="Nelson K.E."/>
            <person name="Salzberg S.L."/>
            <person name="Smith H.O."/>
            <person name="Venter J.C."/>
            <person name="Fraser C.M."/>
        </authorList>
    </citation>
    <scope>NUCLEOTIDE SEQUENCE [LARGE SCALE GENOMIC DNA]</scope>
    <source>
        <strain>ATCC 13939 / DSM 20539 / JCM 16871 / CCUG 27074 / LMG 4051 / NBRC 15346 / NCIMB 9279 / VKM B-1422 / R1</strain>
    </source>
</reference>
<gene>
    <name evidence="1" type="primary">mutL</name>
    <name type="ordered locus">DR_1696</name>
</gene>
<proteinExistence type="inferred from homology"/>
<organism>
    <name type="scientific">Deinococcus radiodurans (strain ATCC 13939 / DSM 20539 / JCM 16871 / CCUG 27074 / LMG 4051 / NBRC 15346 / NCIMB 9279 / VKM B-1422 / R1)</name>
    <dbReference type="NCBI Taxonomy" id="243230"/>
    <lineage>
        <taxon>Bacteria</taxon>
        <taxon>Thermotogati</taxon>
        <taxon>Deinococcota</taxon>
        <taxon>Deinococci</taxon>
        <taxon>Deinococcales</taxon>
        <taxon>Deinococcaceae</taxon>
        <taxon>Deinococcus</taxon>
    </lineage>
</organism>
<comment type="function">
    <text evidence="1">This protein is involved in the repair of mismatches in DNA. It is required for dam-dependent methyl-directed DNA mismatch repair. May act as a 'molecular matchmaker', a protein that promotes the formation of a stable complex between two or more DNA-binding proteins in an ATP-dependent manner without itself being part of a final effector complex.</text>
</comment>
<comment type="similarity">
    <text evidence="1">Belongs to the DNA mismatch repair MutL/HexB family.</text>
</comment>
<accession>Q9RTR0</accession>
<feature type="chain" id="PRO_0000177942" description="DNA mismatch repair protein MutL">
    <location>
        <begin position="1"/>
        <end position="547"/>
    </location>
</feature>
<name>MUTL_DEIRA</name>
<evidence type="ECO:0000255" key="1">
    <source>
        <dbReference type="HAMAP-Rule" id="MF_00149"/>
    </source>
</evidence>